<accession>P99501</accession>
<reference key="1">
    <citation type="journal article" date="1997" name="Electrophoresis">
        <title>HSC-2DPAGE and the two-dimensional gel electrophoresis database of dog heart proteins.</title>
        <authorList>
            <person name="Dunn M.J."/>
            <person name="Corbett J.M."/>
            <person name="Wheeler C.H."/>
        </authorList>
    </citation>
    <scope>PROTEIN SEQUENCE</scope>
    <source>
        <tissue>Heart</tissue>
    </source>
</reference>
<proteinExistence type="evidence at protein level"/>
<sequence length="11" mass="1274">SHGSHETDEEF</sequence>
<comment type="function">
    <text evidence="2">Component of the cytochrome c oxidase, the last enzyme in the mitochondrial electron transport chain which drives oxidative phosphorylation. The respiratory chain contains 3 multisubunit complexes succinate dehydrogenase (complex II, CII), ubiquinol-cytochrome c oxidoreductase (cytochrome b-c1 complex, complex III, CIII) and cytochrome c oxidase (complex IV, CIV), that cooperate to transfer electrons derived from NADH and succinate to molecular oxygen, creating an electrochemical gradient over the inner membrane that drives transmembrane transport and the ATP synthase. Cytochrome c oxidase is the component of the respiratory chain that catalyzes the reduction of oxygen to water. Electrons originating from reduced cytochrome c in the intermembrane space (IMS) are transferred via the dinuclear copper A center (CU(A)) of subunit 2 and heme A of subunit 1 to the active site in subunit 1, a binuclear center (BNC) formed by heme A3 and copper B (CU(B)). The BNC reduces molecular oxygen to 2 water molecules using 4 electrons from cytochrome c in the IMS and 4 protons from the mitochondrial matrix.</text>
</comment>
<comment type="pathway">
    <text evidence="2">Energy metabolism; oxidative phosphorylation.</text>
</comment>
<comment type="subunit">
    <text evidence="1 3">Component of the cytochrome c oxidase (complex IV, CIV), a multisubunit enzyme composed of 14 subunits. The complex is composed of a catalytic core of 3 subunits MT-CO1, MT-CO2 and MT-CO3, encoded in the mitochondrial DNA, and 11 supernumerary subunits COX4I, COX5A, COX5B, COX6A, COX6B, COX6C, COX7A, COX7B, COX7C, COX8 and NDUFA4, which are encoded in the nuclear genome. The complex exists as a monomer or a dimer and forms supercomplexes (SCs) in the inner mitochondrial membrane with NADH-ubiquinone oxidoreductase (complex I, CI) and ubiquinol-cytochrome c oxidoreductase (cytochrome b-c1 complex, complex III, CIII), resulting in different assemblies (supercomplex SCI(1)III(2)IV(1) and megacomplex MCI(2)III(2)IV(2)) (By similarity). Interacts with AFG1L (By similarity). Interacts with RAB5IF (By similarity).</text>
</comment>
<comment type="subcellular location">
    <subcellularLocation>
        <location evidence="1">Mitochondrion inner membrane</location>
        <topology evidence="1">Peripheral membrane protein</topology>
        <orientation evidence="1">Matrix side</orientation>
    </subcellularLocation>
</comment>
<comment type="PTM">
    <text evidence="3">In response to mitochondrial stress, the precursor protein is ubiquitinated by the SIFI complex in the cytoplasm before mitochondrial import, leading to its degradation. Within the SIFI complex, UBR4 initiates ubiquitin chain that are further elongated or branched by KCMF1.</text>
</comment>
<comment type="similarity">
    <text evidence="4">Belongs to the cytochrome c oxidase subunit 5A family.</text>
</comment>
<evidence type="ECO:0000250" key="1">
    <source>
        <dbReference type="UniProtKB" id="P00426"/>
    </source>
</evidence>
<evidence type="ECO:0000250" key="2">
    <source>
        <dbReference type="UniProtKB" id="P00427"/>
    </source>
</evidence>
<evidence type="ECO:0000250" key="3">
    <source>
        <dbReference type="UniProtKB" id="P20674"/>
    </source>
</evidence>
<evidence type="ECO:0000305" key="4"/>
<keyword id="KW-0903">Direct protein sequencing</keyword>
<keyword id="KW-0349">Heme</keyword>
<keyword id="KW-0408">Iron</keyword>
<keyword id="KW-0472">Membrane</keyword>
<keyword id="KW-0479">Metal-binding</keyword>
<keyword id="KW-0496">Mitochondrion</keyword>
<keyword id="KW-0999">Mitochondrion inner membrane</keyword>
<keyword id="KW-1185">Reference proteome</keyword>
<keyword id="KW-0832">Ubl conjugation</keyword>
<feature type="chain" id="PRO_0000195213" description="Cytochrome c oxidase subunit 5A, mitochondrial">
    <location>
        <begin position="1"/>
        <end position="11" status="greater than"/>
    </location>
</feature>
<feature type="non-terminal residue">
    <location>
        <position position="11"/>
    </location>
</feature>
<dbReference type="InParanoid" id="P99501"/>
<dbReference type="OrthoDB" id="5778907at2759"/>
<dbReference type="UniPathway" id="UPA00705"/>
<dbReference type="Proteomes" id="UP000002254">
    <property type="component" value="Unplaced"/>
</dbReference>
<dbReference type="Proteomes" id="UP000694429">
    <property type="component" value="Unplaced"/>
</dbReference>
<dbReference type="Proteomes" id="UP000694542">
    <property type="component" value="Unplaced"/>
</dbReference>
<dbReference type="Proteomes" id="UP000805418">
    <property type="component" value="Unplaced"/>
</dbReference>
<dbReference type="GO" id="GO:0005743">
    <property type="term" value="C:mitochondrial inner membrane"/>
    <property type="evidence" value="ECO:0007669"/>
    <property type="project" value="UniProtKB-SubCell"/>
</dbReference>
<dbReference type="GO" id="GO:0046872">
    <property type="term" value="F:metal ion binding"/>
    <property type="evidence" value="ECO:0007669"/>
    <property type="project" value="UniProtKB-KW"/>
</dbReference>
<dbReference type="GO" id="GO:0006119">
    <property type="term" value="P:oxidative phosphorylation"/>
    <property type="evidence" value="ECO:0007669"/>
    <property type="project" value="UniProtKB-UniPathway"/>
</dbReference>
<name>COX5A_CANLF</name>
<gene>
    <name type="primary">COX5A</name>
</gene>
<organism>
    <name type="scientific">Canis lupus familiaris</name>
    <name type="common">Dog</name>
    <name type="synonym">Canis familiaris</name>
    <dbReference type="NCBI Taxonomy" id="9615"/>
    <lineage>
        <taxon>Eukaryota</taxon>
        <taxon>Metazoa</taxon>
        <taxon>Chordata</taxon>
        <taxon>Craniata</taxon>
        <taxon>Vertebrata</taxon>
        <taxon>Euteleostomi</taxon>
        <taxon>Mammalia</taxon>
        <taxon>Eutheria</taxon>
        <taxon>Laurasiatheria</taxon>
        <taxon>Carnivora</taxon>
        <taxon>Caniformia</taxon>
        <taxon>Canidae</taxon>
        <taxon>Canis</taxon>
    </lineage>
</organism>
<protein>
    <recommendedName>
        <fullName>Cytochrome c oxidase subunit 5A, mitochondrial</fullName>
    </recommendedName>
    <alternativeName>
        <fullName>Cytochrome c oxidase polypeptide Va</fullName>
    </alternativeName>
</protein>